<reference key="1">
    <citation type="journal article" date="2002" name="Nature">
        <title>The genome sequence of Schizosaccharomyces pombe.</title>
        <authorList>
            <person name="Wood V."/>
            <person name="Gwilliam R."/>
            <person name="Rajandream M.A."/>
            <person name="Lyne M.H."/>
            <person name="Lyne R."/>
            <person name="Stewart A."/>
            <person name="Sgouros J.G."/>
            <person name="Peat N."/>
            <person name="Hayles J."/>
            <person name="Baker S.G."/>
            <person name="Basham D."/>
            <person name="Bowman S."/>
            <person name="Brooks K."/>
            <person name="Brown D."/>
            <person name="Brown S."/>
            <person name="Chillingworth T."/>
            <person name="Churcher C.M."/>
            <person name="Collins M."/>
            <person name="Connor R."/>
            <person name="Cronin A."/>
            <person name="Davis P."/>
            <person name="Feltwell T."/>
            <person name="Fraser A."/>
            <person name="Gentles S."/>
            <person name="Goble A."/>
            <person name="Hamlin N."/>
            <person name="Harris D.E."/>
            <person name="Hidalgo J."/>
            <person name="Hodgson G."/>
            <person name="Holroyd S."/>
            <person name="Hornsby T."/>
            <person name="Howarth S."/>
            <person name="Huckle E.J."/>
            <person name="Hunt S."/>
            <person name="Jagels K."/>
            <person name="James K.D."/>
            <person name="Jones L."/>
            <person name="Jones M."/>
            <person name="Leather S."/>
            <person name="McDonald S."/>
            <person name="McLean J."/>
            <person name="Mooney P."/>
            <person name="Moule S."/>
            <person name="Mungall K.L."/>
            <person name="Murphy L.D."/>
            <person name="Niblett D."/>
            <person name="Odell C."/>
            <person name="Oliver K."/>
            <person name="O'Neil S."/>
            <person name="Pearson D."/>
            <person name="Quail M.A."/>
            <person name="Rabbinowitsch E."/>
            <person name="Rutherford K.M."/>
            <person name="Rutter S."/>
            <person name="Saunders D."/>
            <person name="Seeger K."/>
            <person name="Sharp S."/>
            <person name="Skelton J."/>
            <person name="Simmonds M.N."/>
            <person name="Squares R."/>
            <person name="Squares S."/>
            <person name="Stevens K."/>
            <person name="Taylor K."/>
            <person name="Taylor R.G."/>
            <person name="Tivey A."/>
            <person name="Walsh S.V."/>
            <person name="Warren T."/>
            <person name="Whitehead S."/>
            <person name="Woodward J.R."/>
            <person name="Volckaert G."/>
            <person name="Aert R."/>
            <person name="Robben J."/>
            <person name="Grymonprez B."/>
            <person name="Weltjens I."/>
            <person name="Vanstreels E."/>
            <person name="Rieger M."/>
            <person name="Schaefer M."/>
            <person name="Mueller-Auer S."/>
            <person name="Gabel C."/>
            <person name="Fuchs M."/>
            <person name="Duesterhoeft A."/>
            <person name="Fritzc C."/>
            <person name="Holzer E."/>
            <person name="Moestl D."/>
            <person name="Hilbert H."/>
            <person name="Borzym K."/>
            <person name="Langer I."/>
            <person name="Beck A."/>
            <person name="Lehrach H."/>
            <person name="Reinhardt R."/>
            <person name="Pohl T.M."/>
            <person name="Eger P."/>
            <person name="Zimmermann W."/>
            <person name="Wedler H."/>
            <person name="Wambutt R."/>
            <person name="Purnelle B."/>
            <person name="Goffeau A."/>
            <person name="Cadieu E."/>
            <person name="Dreano S."/>
            <person name="Gloux S."/>
            <person name="Lelaure V."/>
            <person name="Mottier S."/>
            <person name="Galibert F."/>
            <person name="Aves S.J."/>
            <person name="Xiang Z."/>
            <person name="Hunt C."/>
            <person name="Moore K."/>
            <person name="Hurst S.M."/>
            <person name="Lucas M."/>
            <person name="Rochet M."/>
            <person name="Gaillardin C."/>
            <person name="Tallada V.A."/>
            <person name="Garzon A."/>
            <person name="Thode G."/>
            <person name="Daga R.R."/>
            <person name="Cruzado L."/>
            <person name="Jimenez J."/>
            <person name="Sanchez M."/>
            <person name="del Rey F."/>
            <person name="Benito J."/>
            <person name="Dominguez A."/>
            <person name="Revuelta J.L."/>
            <person name="Moreno S."/>
            <person name="Armstrong J."/>
            <person name="Forsburg S.L."/>
            <person name="Cerutti L."/>
            <person name="Lowe T."/>
            <person name="McCombie W.R."/>
            <person name="Paulsen I."/>
            <person name="Potashkin J."/>
            <person name="Shpakovski G.V."/>
            <person name="Ussery D."/>
            <person name="Barrell B.G."/>
            <person name="Nurse P."/>
        </authorList>
    </citation>
    <scope>NUCLEOTIDE SEQUENCE [LARGE SCALE GENOMIC DNA]</scope>
    <source>
        <strain>972 / ATCC 24843</strain>
    </source>
</reference>
<reference key="2">
    <citation type="journal article" date="2006" name="Nat. Biotechnol.">
        <title>ORFeome cloning and global analysis of protein localization in the fission yeast Schizosaccharomyces pombe.</title>
        <authorList>
            <person name="Matsuyama A."/>
            <person name="Arai R."/>
            <person name="Yashiroda Y."/>
            <person name="Shirai A."/>
            <person name="Kamata A."/>
            <person name="Sekido S."/>
            <person name="Kobayashi Y."/>
            <person name="Hashimoto A."/>
            <person name="Hamamoto M."/>
            <person name="Hiraoka Y."/>
            <person name="Horinouchi S."/>
            <person name="Yoshida M."/>
        </authorList>
    </citation>
    <scope>SUBCELLULAR LOCATION [LARGE SCALE ANALYSIS]</scope>
</reference>
<gene>
    <name evidence="3" type="primary">duc2</name>
    <name type="ORF">SPBC409.17c</name>
</gene>
<comment type="subcellular location">
    <subcellularLocation>
        <location evidence="1">Cytoplasm</location>
    </subcellularLocation>
    <subcellularLocation>
        <location evidence="1">Nucleus</location>
    </subcellularLocation>
</comment>
<comment type="similarity">
    <text evidence="2">Belongs to the UPF0590 family.</text>
</comment>
<feature type="chain" id="PRO_0000339161" description="DUF1769 family protein">
    <location>
        <begin position="1"/>
        <end position="222"/>
    </location>
</feature>
<sequence>MKCFLICGSKKEPISINGTPNVVKSKYFEGDVKVRLRDYETPDEEYFEQSNDTCSIMIRGRFLPTESTLTADDILFGNQFEKPLRDVLPMGSNLLMKGLQYVDPSIEFDLYCDQPWAFSPFFATMTKMQVSDALLPMEYFEDHSSRRSQMQQQVIRQESSIDPNKYILADFCNPFFNPSTLSISIPYTKMSFSIKNYYNGQPLRYFCKTRDGNVIFAVEFDL</sequence>
<accession>Q9UUA7</accession>
<organism>
    <name type="scientific">Schizosaccharomyces pombe (strain 972 / ATCC 24843)</name>
    <name type="common">Fission yeast</name>
    <dbReference type="NCBI Taxonomy" id="284812"/>
    <lineage>
        <taxon>Eukaryota</taxon>
        <taxon>Fungi</taxon>
        <taxon>Dikarya</taxon>
        <taxon>Ascomycota</taxon>
        <taxon>Taphrinomycotina</taxon>
        <taxon>Schizosaccharomycetes</taxon>
        <taxon>Schizosaccharomycetales</taxon>
        <taxon>Schizosaccharomycetaceae</taxon>
        <taxon>Schizosaccharomyces</taxon>
    </lineage>
</organism>
<proteinExistence type="inferred from homology"/>
<name>DUC2_SCHPO</name>
<evidence type="ECO:0000269" key="1">
    <source>
    </source>
</evidence>
<evidence type="ECO:0000305" key="2"/>
<evidence type="ECO:0000312" key="3">
    <source>
        <dbReference type="PomBase" id="SPBC409.17c"/>
    </source>
</evidence>
<dbReference type="EMBL" id="CU329671">
    <property type="protein sequence ID" value="CAB52619.1"/>
    <property type="molecule type" value="Genomic_DNA"/>
</dbReference>
<dbReference type="PIR" id="T40444">
    <property type="entry name" value="T40444"/>
</dbReference>
<dbReference type="RefSeq" id="NP_595467.1">
    <property type="nucleotide sequence ID" value="NM_001021377.2"/>
</dbReference>
<dbReference type="BioGRID" id="277344">
    <property type="interactions" value="4"/>
</dbReference>
<dbReference type="PaxDb" id="4896-SPBC409.17c.1"/>
<dbReference type="EnsemblFungi" id="SPBC409.17c.1">
    <property type="protein sequence ID" value="SPBC409.17c.1:pep"/>
    <property type="gene ID" value="SPBC409.17c"/>
</dbReference>
<dbReference type="GeneID" id="2540826"/>
<dbReference type="KEGG" id="spo:2540826"/>
<dbReference type="PomBase" id="SPBC409.17c"/>
<dbReference type="VEuPathDB" id="FungiDB:SPBC409.17c"/>
<dbReference type="eggNOG" id="ENOG502RXNE">
    <property type="taxonomic scope" value="Eukaryota"/>
</dbReference>
<dbReference type="HOGENOM" id="CLU_047849_1_1_1"/>
<dbReference type="InParanoid" id="Q9UUA7"/>
<dbReference type="OMA" id="DRQGITW"/>
<dbReference type="PhylomeDB" id="Q9UUA7"/>
<dbReference type="PRO" id="PR:Q9UUA7"/>
<dbReference type="Proteomes" id="UP000002485">
    <property type="component" value="Chromosome II"/>
</dbReference>
<dbReference type="GO" id="GO:0005829">
    <property type="term" value="C:cytosol"/>
    <property type="evidence" value="ECO:0007005"/>
    <property type="project" value="PomBase"/>
</dbReference>
<dbReference type="GO" id="GO:0005634">
    <property type="term" value="C:nucleus"/>
    <property type="evidence" value="ECO:0007005"/>
    <property type="project" value="PomBase"/>
</dbReference>
<dbReference type="InterPro" id="IPR013897">
    <property type="entry name" value="Duc1"/>
</dbReference>
<dbReference type="PANTHER" id="PTHR34826">
    <property type="entry name" value="UPF0590 PROTEIN C409.17C"/>
    <property type="match status" value="1"/>
</dbReference>
<dbReference type="PANTHER" id="PTHR34826:SF2">
    <property type="entry name" value="UPF0590 PROTEIN C409.17C"/>
    <property type="match status" value="1"/>
</dbReference>
<dbReference type="Pfam" id="PF08588">
    <property type="entry name" value="Duc1"/>
    <property type="match status" value="1"/>
</dbReference>
<keyword id="KW-0963">Cytoplasm</keyword>
<keyword id="KW-0539">Nucleus</keyword>
<keyword id="KW-1185">Reference proteome</keyword>
<protein>
    <recommendedName>
        <fullName evidence="3">DUF1769 family protein</fullName>
    </recommendedName>
</protein>